<keyword id="KW-0002">3D-structure</keyword>
<keyword id="KW-0007">Acetylation</keyword>
<keyword id="KW-0025">Alternative splicing</keyword>
<keyword id="KW-0131">Cell cycle</keyword>
<keyword id="KW-0132">Cell division</keyword>
<keyword id="KW-0158">Chromosome</keyword>
<keyword id="KW-0963">Cytoplasm</keyword>
<keyword id="KW-0225">Disease variant</keyword>
<keyword id="KW-0226">DNA condensation</keyword>
<keyword id="KW-1017">Isopeptide bond</keyword>
<keyword id="KW-0498">Mitosis</keyword>
<keyword id="KW-0539">Nucleus</keyword>
<keyword id="KW-0597">Phosphoprotein</keyword>
<keyword id="KW-0905">Primary microcephaly</keyword>
<keyword id="KW-1267">Proteomics identification</keyword>
<keyword id="KW-1185">Reference proteome</keyword>
<keyword id="KW-0832">Ubl conjugation</keyword>
<reference key="1">
    <citation type="journal article" date="1994" name="DNA Res.">
        <title>Prediction of the coding sequences of unidentified human genes. II. The coding sequences of 40 new genes (KIAA0041-KIAA0080) deduced by analysis of cDNA clones from human cell line KG-1.</title>
        <authorList>
            <person name="Nomura N."/>
            <person name="Nagase T."/>
            <person name="Miyajima N."/>
            <person name="Sazuka T."/>
            <person name="Tanaka A."/>
            <person name="Sato S."/>
            <person name="Seki N."/>
            <person name="Kawarabayasi Y."/>
            <person name="Ishikawa K."/>
            <person name="Tabata S."/>
        </authorList>
    </citation>
    <scope>NUCLEOTIDE SEQUENCE [LARGE SCALE MRNA]</scope>
    <source>
        <tissue>Bone marrow</tissue>
    </source>
</reference>
<reference key="2">
    <citation type="journal article" date="2004" name="Nat. Genet.">
        <title>Complete sequencing and characterization of 21,243 full-length human cDNAs.</title>
        <authorList>
            <person name="Ota T."/>
            <person name="Suzuki Y."/>
            <person name="Nishikawa T."/>
            <person name="Otsuki T."/>
            <person name="Sugiyama T."/>
            <person name="Irie R."/>
            <person name="Wakamatsu A."/>
            <person name="Hayashi K."/>
            <person name="Sato H."/>
            <person name="Nagai K."/>
            <person name="Kimura K."/>
            <person name="Makita H."/>
            <person name="Sekine M."/>
            <person name="Obayashi M."/>
            <person name="Nishi T."/>
            <person name="Shibahara T."/>
            <person name="Tanaka T."/>
            <person name="Ishii S."/>
            <person name="Yamamoto J."/>
            <person name="Saito K."/>
            <person name="Kawai Y."/>
            <person name="Isono Y."/>
            <person name="Nakamura Y."/>
            <person name="Nagahari K."/>
            <person name="Murakami K."/>
            <person name="Yasuda T."/>
            <person name="Iwayanagi T."/>
            <person name="Wagatsuma M."/>
            <person name="Shiratori A."/>
            <person name="Sudo H."/>
            <person name="Hosoiri T."/>
            <person name="Kaku Y."/>
            <person name="Kodaira H."/>
            <person name="Kondo H."/>
            <person name="Sugawara M."/>
            <person name="Takahashi M."/>
            <person name="Kanda K."/>
            <person name="Yokoi T."/>
            <person name="Furuya T."/>
            <person name="Kikkawa E."/>
            <person name="Omura Y."/>
            <person name="Abe K."/>
            <person name="Kamihara K."/>
            <person name="Katsuta N."/>
            <person name="Sato K."/>
            <person name="Tanikawa M."/>
            <person name="Yamazaki M."/>
            <person name="Ninomiya K."/>
            <person name="Ishibashi T."/>
            <person name="Yamashita H."/>
            <person name="Murakawa K."/>
            <person name="Fujimori K."/>
            <person name="Tanai H."/>
            <person name="Kimata M."/>
            <person name="Watanabe M."/>
            <person name="Hiraoka S."/>
            <person name="Chiba Y."/>
            <person name="Ishida S."/>
            <person name="Ono Y."/>
            <person name="Takiguchi S."/>
            <person name="Watanabe S."/>
            <person name="Yosida M."/>
            <person name="Hotuta T."/>
            <person name="Kusano J."/>
            <person name="Kanehori K."/>
            <person name="Takahashi-Fujii A."/>
            <person name="Hara H."/>
            <person name="Tanase T.-O."/>
            <person name="Nomura Y."/>
            <person name="Togiya S."/>
            <person name="Komai F."/>
            <person name="Hara R."/>
            <person name="Takeuchi K."/>
            <person name="Arita M."/>
            <person name="Imose N."/>
            <person name="Musashino K."/>
            <person name="Yuuki H."/>
            <person name="Oshima A."/>
            <person name="Sasaki N."/>
            <person name="Aotsuka S."/>
            <person name="Yoshikawa Y."/>
            <person name="Matsunawa H."/>
            <person name="Ichihara T."/>
            <person name="Shiohata N."/>
            <person name="Sano S."/>
            <person name="Moriya S."/>
            <person name="Momiyama H."/>
            <person name="Satoh N."/>
            <person name="Takami S."/>
            <person name="Terashima Y."/>
            <person name="Suzuki O."/>
            <person name="Nakagawa S."/>
            <person name="Senoh A."/>
            <person name="Mizoguchi H."/>
            <person name="Goto Y."/>
            <person name="Shimizu F."/>
            <person name="Wakebe H."/>
            <person name="Hishigaki H."/>
            <person name="Watanabe T."/>
            <person name="Sugiyama A."/>
            <person name="Takemoto M."/>
            <person name="Kawakami B."/>
            <person name="Yamazaki M."/>
            <person name="Watanabe K."/>
            <person name="Kumagai A."/>
            <person name="Itakura S."/>
            <person name="Fukuzumi Y."/>
            <person name="Fujimori Y."/>
            <person name="Komiyama M."/>
            <person name="Tashiro H."/>
            <person name="Tanigami A."/>
            <person name="Fujiwara T."/>
            <person name="Ono T."/>
            <person name="Yamada K."/>
            <person name="Fujii Y."/>
            <person name="Ozaki K."/>
            <person name="Hirao M."/>
            <person name="Ohmori Y."/>
            <person name="Kawabata A."/>
            <person name="Hikiji T."/>
            <person name="Kobatake N."/>
            <person name="Inagaki H."/>
            <person name="Ikema Y."/>
            <person name="Okamoto S."/>
            <person name="Okitani R."/>
            <person name="Kawakami T."/>
            <person name="Noguchi S."/>
            <person name="Itoh T."/>
            <person name="Shigeta K."/>
            <person name="Senba T."/>
            <person name="Matsumura K."/>
            <person name="Nakajima Y."/>
            <person name="Mizuno T."/>
            <person name="Morinaga M."/>
            <person name="Sasaki M."/>
            <person name="Togashi T."/>
            <person name="Oyama M."/>
            <person name="Hata H."/>
            <person name="Watanabe M."/>
            <person name="Komatsu T."/>
            <person name="Mizushima-Sugano J."/>
            <person name="Satoh T."/>
            <person name="Shirai Y."/>
            <person name="Takahashi Y."/>
            <person name="Nakagawa K."/>
            <person name="Okumura K."/>
            <person name="Nagase T."/>
            <person name="Nomura N."/>
            <person name="Kikuchi H."/>
            <person name="Masuho Y."/>
            <person name="Yamashita R."/>
            <person name="Nakai K."/>
            <person name="Yada T."/>
            <person name="Nakamura Y."/>
            <person name="Ohara O."/>
            <person name="Isogai T."/>
            <person name="Sugano S."/>
        </authorList>
    </citation>
    <scope>NUCLEOTIDE SEQUENCE [LARGE SCALE MRNA] (ISOFORM 2)</scope>
    <source>
        <tissue>Kidney</tissue>
    </source>
</reference>
<reference key="3">
    <citation type="journal article" date="2005" name="Nature">
        <title>Generation and annotation of the DNA sequences of human chromosomes 2 and 4.</title>
        <authorList>
            <person name="Hillier L.W."/>
            <person name="Graves T.A."/>
            <person name="Fulton R.S."/>
            <person name="Fulton L.A."/>
            <person name="Pepin K.H."/>
            <person name="Minx P."/>
            <person name="Wagner-McPherson C."/>
            <person name="Layman D."/>
            <person name="Wylie K."/>
            <person name="Sekhon M."/>
            <person name="Becker M.C."/>
            <person name="Fewell G.A."/>
            <person name="Delehaunty K.D."/>
            <person name="Miner T.L."/>
            <person name="Nash W.E."/>
            <person name="Kremitzki C."/>
            <person name="Oddy L."/>
            <person name="Du H."/>
            <person name="Sun H."/>
            <person name="Bradshaw-Cordum H."/>
            <person name="Ali J."/>
            <person name="Carter J."/>
            <person name="Cordes M."/>
            <person name="Harris A."/>
            <person name="Isak A."/>
            <person name="van Brunt A."/>
            <person name="Nguyen C."/>
            <person name="Du F."/>
            <person name="Courtney L."/>
            <person name="Kalicki J."/>
            <person name="Ozersky P."/>
            <person name="Abbott S."/>
            <person name="Armstrong J."/>
            <person name="Belter E.A."/>
            <person name="Caruso L."/>
            <person name="Cedroni M."/>
            <person name="Cotton M."/>
            <person name="Davidson T."/>
            <person name="Desai A."/>
            <person name="Elliott G."/>
            <person name="Erb T."/>
            <person name="Fronick C."/>
            <person name="Gaige T."/>
            <person name="Haakenson W."/>
            <person name="Haglund K."/>
            <person name="Holmes A."/>
            <person name="Harkins R."/>
            <person name="Kim K."/>
            <person name="Kruchowski S.S."/>
            <person name="Strong C.M."/>
            <person name="Grewal N."/>
            <person name="Goyea E."/>
            <person name="Hou S."/>
            <person name="Levy A."/>
            <person name="Martinka S."/>
            <person name="Mead K."/>
            <person name="McLellan M.D."/>
            <person name="Meyer R."/>
            <person name="Randall-Maher J."/>
            <person name="Tomlinson C."/>
            <person name="Dauphin-Kohlberg S."/>
            <person name="Kozlowicz-Reilly A."/>
            <person name="Shah N."/>
            <person name="Swearengen-Shahid S."/>
            <person name="Snider J."/>
            <person name="Strong J.T."/>
            <person name="Thompson J."/>
            <person name="Yoakum M."/>
            <person name="Leonard S."/>
            <person name="Pearman C."/>
            <person name="Trani L."/>
            <person name="Radionenko M."/>
            <person name="Waligorski J.E."/>
            <person name="Wang C."/>
            <person name="Rock S.M."/>
            <person name="Tin-Wollam A.-M."/>
            <person name="Maupin R."/>
            <person name="Latreille P."/>
            <person name="Wendl M.C."/>
            <person name="Yang S.-P."/>
            <person name="Pohl C."/>
            <person name="Wallis J.W."/>
            <person name="Spieth J."/>
            <person name="Bieri T.A."/>
            <person name="Berkowicz N."/>
            <person name="Nelson J.O."/>
            <person name="Osborne J."/>
            <person name="Ding L."/>
            <person name="Meyer R."/>
            <person name="Sabo A."/>
            <person name="Shotland Y."/>
            <person name="Sinha P."/>
            <person name="Wohldmann P.E."/>
            <person name="Cook L.L."/>
            <person name="Hickenbotham M.T."/>
            <person name="Eldred J."/>
            <person name="Williams D."/>
            <person name="Jones T.A."/>
            <person name="She X."/>
            <person name="Ciccarelli F.D."/>
            <person name="Izaurralde E."/>
            <person name="Taylor J."/>
            <person name="Schmutz J."/>
            <person name="Myers R.M."/>
            <person name="Cox D.R."/>
            <person name="Huang X."/>
            <person name="McPherson J.D."/>
            <person name="Mardis E.R."/>
            <person name="Clifton S.W."/>
            <person name="Warren W.C."/>
            <person name="Chinwalla A.T."/>
            <person name="Eddy S.R."/>
            <person name="Marra M.A."/>
            <person name="Ovcharenko I."/>
            <person name="Furey T.S."/>
            <person name="Miller W."/>
            <person name="Eichler E.E."/>
            <person name="Bork P."/>
            <person name="Suyama M."/>
            <person name="Torrents D."/>
            <person name="Waterston R.H."/>
            <person name="Wilson R.K."/>
        </authorList>
    </citation>
    <scope>NUCLEOTIDE SEQUENCE [LARGE SCALE GENOMIC DNA]</scope>
</reference>
<reference key="4">
    <citation type="journal article" date="2004" name="Genome Res.">
        <title>The status, quality, and expansion of the NIH full-length cDNA project: the Mammalian Gene Collection (MGC).</title>
        <authorList>
            <consortium name="The MGC Project Team"/>
        </authorList>
    </citation>
    <scope>NUCLEOTIDE SEQUENCE [LARGE SCALE MRNA]</scope>
    <scope>VARIANT ALA-539</scope>
    <source>
        <tissue>Placenta</tissue>
    </source>
</reference>
<reference key="5">
    <citation type="journal article" date="2001" name="Mol. Biol. Cell">
        <title>Cell cycle-dependent expression and nucleolar localization of hCAP-H.</title>
        <authorList>
            <person name="Cabello O.A."/>
            <person name="Eliseeva E."/>
            <person name="He W.G."/>
            <person name="Youssoufian H."/>
            <person name="Plon S.E."/>
            <person name="Brinkley B.R."/>
            <person name="Belmont J.W."/>
        </authorList>
    </citation>
    <scope>SUBCELLULAR LOCATION DURING THE CELL CYCLE</scope>
    <scope>TISSUE SPECIFICITY</scope>
</reference>
<reference key="6">
    <citation type="journal article" date="2001" name="J. Biol. Chem.">
        <title>Chromosome condensation by a human condensin complex in Xenopus egg extracts.</title>
        <authorList>
            <person name="Kimura K."/>
            <person name="Cuvier O."/>
            <person name="Hirano T."/>
        </authorList>
    </citation>
    <scope>IDENTIFICATION IN A CONDENSIN COMPLEX WITH SMC2; SMC4; NCAPD2 AND NCAPG</scope>
    <scope>FUNCTION OF THE COMPLEX</scope>
</reference>
<reference key="7">
    <citation type="journal article" date="2008" name="Mol. Cell">
        <title>Kinase-selective enrichment enables quantitative phosphoproteomics of the kinome across the cell cycle.</title>
        <authorList>
            <person name="Daub H."/>
            <person name="Olsen J.V."/>
            <person name="Bairlein M."/>
            <person name="Gnad F."/>
            <person name="Oppermann F.S."/>
            <person name="Korner R."/>
            <person name="Greff Z."/>
            <person name="Keri G."/>
            <person name="Stemmann O."/>
            <person name="Mann M."/>
        </authorList>
    </citation>
    <scope>IDENTIFICATION BY MASS SPECTROMETRY [LARGE SCALE ANALYSIS]</scope>
    <source>
        <tissue>Cervix carcinoma</tissue>
    </source>
</reference>
<reference key="8">
    <citation type="journal article" date="2008" name="Proc. Natl. Acad. Sci. U.S.A.">
        <title>A quantitative atlas of mitotic phosphorylation.</title>
        <authorList>
            <person name="Dephoure N."/>
            <person name="Zhou C."/>
            <person name="Villen J."/>
            <person name="Beausoleil S.A."/>
            <person name="Bakalarski C.E."/>
            <person name="Elledge S.J."/>
            <person name="Gygi S.P."/>
        </authorList>
    </citation>
    <scope>PHOSPHORYLATION [LARGE SCALE ANALYSIS] AT SER-70; SER-78; SER-81; SER-87; SER-92; SER-201; SER-432 AND THR-605</scope>
    <scope>IDENTIFICATION BY MASS SPECTROMETRY [LARGE SCALE ANALYSIS]</scope>
    <source>
        <tissue>Cervix carcinoma</tissue>
    </source>
</reference>
<reference key="9">
    <citation type="journal article" date="2009" name="Anal. Chem.">
        <title>Lys-N and trypsin cover complementary parts of the phosphoproteome in a refined SCX-based approach.</title>
        <authorList>
            <person name="Gauci S."/>
            <person name="Helbig A.O."/>
            <person name="Slijper M."/>
            <person name="Krijgsveld J."/>
            <person name="Heck A.J."/>
            <person name="Mohammed S."/>
        </authorList>
    </citation>
    <scope>IDENTIFICATION BY MASS SPECTROMETRY [LARGE SCALE ANALYSIS]</scope>
</reference>
<reference key="10">
    <citation type="journal article" date="2009" name="Sci. Signal.">
        <title>Quantitative phosphoproteomic analysis of T cell receptor signaling reveals system-wide modulation of protein-protein interactions.</title>
        <authorList>
            <person name="Mayya V."/>
            <person name="Lundgren D.H."/>
            <person name="Hwang S.-I."/>
            <person name="Rezaul K."/>
            <person name="Wu L."/>
            <person name="Eng J.K."/>
            <person name="Rodionov V."/>
            <person name="Han D.K."/>
        </authorList>
    </citation>
    <scope>PHOSPHORYLATION [LARGE SCALE ANALYSIS] AT SER-81</scope>
    <scope>IDENTIFICATION BY MASS SPECTROMETRY [LARGE SCALE ANALYSIS]</scope>
    <source>
        <tissue>Leukemic T-cell</tissue>
    </source>
</reference>
<reference key="11">
    <citation type="journal article" date="2009" name="Science">
        <title>Lysine acetylation targets protein complexes and co-regulates major cellular functions.</title>
        <authorList>
            <person name="Choudhary C."/>
            <person name="Kumar C."/>
            <person name="Gnad F."/>
            <person name="Nielsen M.L."/>
            <person name="Rehman M."/>
            <person name="Walther T.C."/>
            <person name="Olsen J.V."/>
            <person name="Mann M."/>
        </authorList>
    </citation>
    <scope>ACETYLATION [LARGE SCALE ANALYSIS] AT LYS-637</scope>
    <scope>IDENTIFICATION BY MASS SPECTROMETRY [LARGE SCALE ANALYSIS]</scope>
</reference>
<reference key="12">
    <citation type="journal article" date="2010" name="Sci. Signal.">
        <title>Quantitative phosphoproteomics reveals widespread full phosphorylation site occupancy during mitosis.</title>
        <authorList>
            <person name="Olsen J.V."/>
            <person name="Vermeulen M."/>
            <person name="Santamaria A."/>
            <person name="Kumar C."/>
            <person name="Miller M.L."/>
            <person name="Jensen L.J."/>
            <person name="Gnad F."/>
            <person name="Cox J."/>
            <person name="Jensen T.S."/>
            <person name="Nigg E.A."/>
            <person name="Brunak S."/>
            <person name="Mann M."/>
        </authorList>
    </citation>
    <scope>PHOSPHORYLATION [LARGE SCALE ANALYSIS] AT SER-15; SER-25; THR-49; SER-78; SER-81; SER-87; SER-92; SER-96; SER-201; SER-432 AND THR-598</scope>
    <scope>IDENTIFICATION BY MASS SPECTROMETRY [LARGE SCALE ANALYSIS]</scope>
    <source>
        <tissue>Cervix carcinoma</tissue>
    </source>
</reference>
<reference key="13">
    <citation type="journal article" date="2011" name="BMC Syst. Biol.">
        <title>Initial characterization of the human central proteome.</title>
        <authorList>
            <person name="Burkard T.R."/>
            <person name="Planyavsky M."/>
            <person name="Kaupe I."/>
            <person name="Breitwieser F.P."/>
            <person name="Buerckstuemmer T."/>
            <person name="Bennett K.L."/>
            <person name="Superti-Furga G."/>
            <person name="Colinge J."/>
        </authorList>
    </citation>
    <scope>IDENTIFICATION BY MASS SPECTROMETRY [LARGE SCALE ANALYSIS]</scope>
</reference>
<reference key="14">
    <citation type="journal article" date="2011" name="Sci. Signal.">
        <title>System-wide temporal characterization of the proteome and phosphoproteome of human embryonic stem cell differentiation.</title>
        <authorList>
            <person name="Rigbolt K.T."/>
            <person name="Prokhorova T.A."/>
            <person name="Akimov V."/>
            <person name="Henningsen J."/>
            <person name="Johansen P.T."/>
            <person name="Kratchmarova I."/>
            <person name="Kassem M."/>
            <person name="Mann M."/>
            <person name="Olsen J.V."/>
            <person name="Blagoev B."/>
        </authorList>
    </citation>
    <scope>IDENTIFICATION BY MASS SPECTROMETRY [LARGE SCALE ANALYSIS]</scope>
</reference>
<reference key="15">
    <citation type="journal article" date="2012" name="Proc. Natl. Acad. Sci. U.S.A.">
        <title>N-terminal acetylome analyses and functional insights of the N-terminal acetyltransferase NatB.</title>
        <authorList>
            <person name="Van Damme P."/>
            <person name="Lasa M."/>
            <person name="Polevoda B."/>
            <person name="Gazquez C."/>
            <person name="Elosegui-Artola A."/>
            <person name="Kim D.S."/>
            <person name="De Juan-Pardo E."/>
            <person name="Demeyer K."/>
            <person name="Hole K."/>
            <person name="Larrea E."/>
            <person name="Timmerman E."/>
            <person name="Prieto J."/>
            <person name="Arnesen T."/>
            <person name="Sherman F."/>
            <person name="Gevaert K."/>
            <person name="Aldabe R."/>
        </authorList>
    </citation>
    <scope>IDENTIFICATION BY MASS SPECTROMETRY [LARGE SCALE ANALYSIS]</scope>
</reference>
<reference key="16">
    <citation type="journal article" date="2013" name="J. Proteome Res.">
        <title>Toward a comprehensive characterization of a human cancer cell phosphoproteome.</title>
        <authorList>
            <person name="Zhou H."/>
            <person name="Di Palma S."/>
            <person name="Preisinger C."/>
            <person name="Peng M."/>
            <person name="Polat A.N."/>
            <person name="Heck A.J."/>
            <person name="Mohammed S."/>
        </authorList>
    </citation>
    <scope>PHOSPHORYLATION [LARGE SCALE ANALYSIS] AT THR-49; SER-70; SER-78; SER-81; SER-87; SER-89; SER-92; SER-201; SER-233; SER-496 AND THR-605</scope>
    <scope>IDENTIFICATION BY MASS SPECTROMETRY [LARGE SCALE ANALYSIS]</scope>
    <source>
        <tissue>Cervix carcinoma</tissue>
        <tissue>Erythroleukemia</tissue>
    </source>
</reference>
<reference key="17">
    <citation type="journal article" date="2017" name="Nat. Struct. Mol. Biol.">
        <title>Site-specific mapping of the human SUMO proteome reveals co-modification with phosphorylation.</title>
        <authorList>
            <person name="Hendriks I.A."/>
            <person name="Lyon D."/>
            <person name="Young C."/>
            <person name="Jensen L.J."/>
            <person name="Vertegaal A.C."/>
            <person name="Nielsen M.L."/>
        </authorList>
    </citation>
    <scope>SUMOYLATION [LARGE SCALE ANALYSIS] AT LYS-488</scope>
    <scope>IDENTIFICATION BY MASS SPECTROMETRY [LARGE SCALE ANALYSIS]</scope>
</reference>
<reference key="18">
    <citation type="journal article" date="2016" name="Genes Dev.">
        <title>Mutations in genes encoding condensin complex proteins cause microcephaly through decatenation failure at mitosis.</title>
        <authorList>
            <consortium name="Deciphering Developmental Disorders Study"/>
            <person name="Martin C.A."/>
            <person name="Murray J.E."/>
            <person name="Carroll P."/>
            <person name="Leitch A."/>
            <person name="Mackenzie K.J."/>
            <person name="Halachev M."/>
            <person name="Fetit A.E."/>
            <person name="Keith C."/>
            <person name="Bicknell L.S."/>
            <person name="Fluteau A."/>
            <person name="Gautier P."/>
            <person name="Hall E.A."/>
            <person name="Joss S."/>
            <person name="Soares G."/>
            <person name="Silva J."/>
            <person name="Bober M.B."/>
            <person name="Duker A."/>
            <person name="Wise C.A."/>
            <person name="Quigley A.J."/>
            <person name="Phadke S.R."/>
            <person name="Wood A.J."/>
            <person name="Vagnarelli P."/>
            <person name="Jackson A.P."/>
        </authorList>
    </citation>
    <scope>INVOLVEMENT IN MCPH23</scope>
    <scope>VARIANT MCPH23 LEU-243</scope>
    <scope>CHARACTERIZATION OF VARIANT MCPH23 LEU-243</scope>
    <scope>FUNCTION</scope>
</reference>
<protein>
    <recommendedName>
        <fullName>Condensin complex subunit 2</fullName>
    </recommendedName>
    <alternativeName>
        <fullName>Barren homolog protein 1</fullName>
    </alternativeName>
    <alternativeName>
        <fullName>Chromosome-associated protein H</fullName>
        <shortName>hCAP-H</shortName>
    </alternativeName>
    <alternativeName>
        <fullName>Non-SMC condensin I complex subunit H</fullName>
    </alternativeName>
    <alternativeName>
        <fullName>XCAP-H homolog</fullName>
    </alternativeName>
</protein>
<comment type="function">
    <text evidence="4 7">Regulatory subunit of the condensin complex, a complex required for conversion of interphase chromatin into mitotic-like condense chromosomes. The condensin complex probably introduces positive supercoils into relaxed DNA in the presence of type I topoisomerases and converts nicked DNA into positive knotted forms in the presence of type II topoisomerases (PubMed:11136719). Early in neurogenesis, may play an essential role to ensure accurate mitotic chromosome condensation in neuron stem cells, ultimately affecting neuron pool and cortex size (PubMed:27737959).</text>
</comment>
<comment type="subunit">
    <text evidence="4">Component of the condensin complex, which contains the SMC2 and SMC4 heterodimer, and three non SMC subunits that probably regulate the complex: NCAPH/BRRN1, NCAPD2/CAPD2 and NCAPG.</text>
</comment>
<comment type="interaction">
    <interactant intactId="EBI-1046410">
        <id>Q15003</id>
    </interactant>
    <interactant intactId="EBI-353779">
        <id>O00571</id>
        <label>DDX3X</label>
    </interactant>
    <organismsDiffer>false</organismsDiffer>
    <experiments>2</experiments>
</comment>
<comment type="interaction">
    <interactant intactId="EBI-1046410">
        <id>Q15003</id>
    </interactant>
    <interactant intactId="EBI-1044041">
        <id>Q15021</id>
        <label>NCAPD2</label>
    </interactant>
    <organismsDiffer>false</organismsDiffer>
    <experiments>8</experiments>
</comment>
<comment type="interaction">
    <interactant intactId="EBI-1046410">
        <id>Q15003</id>
    </interactant>
    <interactant intactId="EBI-970214">
        <id>Q9BPX3</id>
        <label>NCAPG</label>
    </interactant>
    <organismsDiffer>false</organismsDiffer>
    <experiments>9</experiments>
</comment>
<comment type="interaction">
    <interactant intactId="EBI-1046410">
        <id>Q15003</id>
    </interactant>
    <interactant intactId="EBI-355822">
        <id>O95347</id>
        <label>SMC2</label>
    </interactant>
    <organismsDiffer>false</organismsDiffer>
    <experiments>6</experiments>
</comment>
<comment type="interaction">
    <interactant intactId="EBI-1046410">
        <id>Q15003</id>
    </interactant>
    <interactant intactId="EBI-356173">
        <id>Q9NTJ3</id>
        <label>SMC4</label>
    </interactant>
    <organismsDiffer>false</organismsDiffer>
    <experiments>4</experiments>
</comment>
<comment type="interaction">
    <interactant intactId="EBI-1046410">
        <id>Q15003</id>
    </interactant>
    <interactant intactId="EBI-15929287">
        <id>P04910</id>
        <label>hta2</label>
    </interactant>
    <organismsDiffer>true</organismsDiffer>
    <experiments>2</experiments>
</comment>
<comment type="subcellular location">
    <subcellularLocation>
        <location evidence="5">Nucleus</location>
    </subcellularLocation>
    <subcellularLocation>
        <location evidence="5">Cytoplasm</location>
    </subcellularLocation>
    <subcellularLocation>
        <location evidence="5">Chromosome</location>
    </subcellularLocation>
    <text>In interphase cells, the majority of the condensin complex is found in the cytoplasm, while a minority of the complex is associated with chromatin. A subpopulation of the complex however remains associated with chromosome foci in interphase cells. During mitosis, most of the condensin complex is associated with the chromatin. At the onset of prophase, the regulatory subunits of the complex are phosphorylated by CDK1, leading to condensin's association with chromosome arms and to chromosome condensation. Dissociation from chromosomes is observed in late telophase.</text>
</comment>
<comment type="alternative products">
    <event type="alternative splicing"/>
    <isoform>
        <id>Q15003-1</id>
        <name>1</name>
        <sequence type="displayed"/>
    </isoform>
    <isoform>
        <id>Q15003-2</id>
        <name>2</name>
        <sequence type="described" ref="VSP_055179"/>
    </isoform>
</comment>
<comment type="tissue specificity">
    <text evidence="5">Widely expressed at low level. Expressed in proliferating cells.</text>
</comment>
<comment type="PTM">
    <text evidence="1">Phosphorylated by CDK1. Its phosphorylation, as well as that of NCAPD2 and NCAPG subunits, activates the condensin complex and is required for chromosome condensation (By similarity).</text>
</comment>
<comment type="disease" evidence="7">
    <disease id="DI-05236">
        <name>Microcephaly 23, primary, autosomal recessive</name>
        <acronym>MCPH23</acronym>
        <description>A form of microcephaly, a disease defined as a head circumference more than 3 standard deviations below the age, sex and ethnically matched mean. Brain weight is markedly reduced and the cerebral cortex is disproportionately small.</description>
        <dbReference type="MIM" id="617985"/>
    </disease>
    <text>The disease is caused by variants affecting the gene represented in this entry.</text>
</comment>
<comment type="similarity">
    <text evidence="10">Belongs to the CND2 (condensin subunit 2) family.</text>
</comment>
<comment type="sequence caution" evidence="10">
    <conflict type="erroneous initiation">
        <sequence resource="EMBL-CDS" id="BAA07556"/>
    </conflict>
    <text>Extended N-terminus.</text>
</comment>
<evidence type="ECO:0000250" key="1"/>
<evidence type="ECO:0000250" key="2">
    <source>
        <dbReference type="UniProtKB" id="Q8C156"/>
    </source>
</evidence>
<evidence type="ECO:0000256" key="3">
    <source>
        <dbReference type="SAM" id="MobiDB-lite"/>
    </source>
</evidence>
<evidence type="ECO:0000269" key="4">
    <source>
    </source>
</evidence>
<evidence type="ECO:0000269" key="5">
    <source>
    </source>
</evidence>
<evidence type="ECO:0000269" key="6">
    <source>
    </source>
</evidence>
<evidence type="ECO:0000269" key="7">
    <source>
    </source>
</evidence>
<evidence type="ECO:0000303" key="8">
    <source>
    </source>
</evidence>
<evidence type="ECO:0000303" key="9">
    <source>
    </source>
</evidence>
<evidence type="ECO:0000305" key="10"/>
<evidence type="ECO:0000312" key="11">
    <source>
        <dbReference type="HGNC" id="HGNC:1112"/>
    </source>
</evidence>
<evidence type="ECO:0007744" key="12">
    <source>
    </source>
</evidence>
<evidence type="ECO:0007744" key="13">
    <source>
    </source>
</evidence>
<evidence type="ECO:0007744" key="14">
    <source>
    </source>
</evidence>
<evidence type="ECO:0007744" key="15">
    <source>
    </source>
</evidence>
<evidence type="ECO:0007744" key="16">
    <source>
    </source>
</evidence>
<evidence type="ECO:0007744" key="17">
    <source>
    </source>
</evidence>
<evidence type="ECO:0007829" key="18">
    <source>
        <dbReference type="PDB" id="6IGX"/>
    </source>
</evidence>
<sequence length="741" mass="82563">MGPPGPALPATMNNSSSETRGHPHSASSPSERVFPMPLPRKAPLNIPGTPVLEDFPQNDDEKERLQRRRSRVFDLQFSTDSPRLLASPSSRSIDISATIPKFTNTQITEHYSTCIKLSTENKITTKNAFGLHLIDFMSEILKQKDTEPTNFKVAAGTLDASTKIYAVRVDAVHADVYRVLGGLGKDAPSLEEVEGHVADGSATEMGTTKKAVKPKKKHLHRTIEQNINNLNVSEADRKCEIDPMFQKTAASFDECSTAGVFLSTLHCQDYRSELLFPSDVQTLSTGEPLELPELGCVEMTDLKAPLQQCAEDRQICPSLAGFQFTQWDSETHNESVSALVDKFKKNDQVFDINAEVDESDCGDFPDGSLGDDFDANDEPDHTAVGDHEEFRSWKEPCQVQSCQEEMISLGDGDIRTMCPLLSMKPGEYSYFSPRTMSMWAGPDHWRFRPRRKQDAPSQSENKKKSTKKDFEIDFEDDIDFDVYFRKTKAATILTKSTLENQNWRATTLPTDFNYNVDTLVQLHLKPGTRLLKMAQGHRVETEHYEEIEDYDYNNPNDTSNFCPGLQAADSDDEDLDDLFVGPVGNSDLSPYPCHPPKTAQQNGDTPEAQGLDITTYGESNLVAEPQKVNKIEIHYAKTAKKMDMKKLKQSMWSLLTALSGKEADAEANHREAGKEAALAEVADEKMLSGLTKDLQRSLPPVMAQNLSIPLAFACLLHLANEKNLKLEGTEDLSDVLVRQGD</sequence>
<name>CND2_HUMAN</name>
<accession>Q15003</accession>
<accession>B4E189</accession>
<accession>Q8TB87</accession>
<dbReference type="EMBL" id="D38553">
    <property type="protein sequence ID" value="BAA07556.1"/>
    <property type="status" value="ALT_INIT"/>
    <property type="molecule type" value="mRNA"/>
</dbReference>
<dbReference type="EMBL" id="AK303725">
    <property type="protein sequence ID" value="BAG64701.1"/>
    <property type="molecule type" value="mRNA"/>
</dbReference>
<dbReference type="EMBL" id="AC021188">
    <property type="status" value="NOT_ANNOTATED_CDS"/>
    <property type="molecule type" value="Genomic_DNA"/>
</dbReference>
<dbReference type="EMBL" id="BC024211">
    <property type="protein sequence ID" value="AAH24211.1"/>
    <property type="molecule type" value="mRNA"/>
</dbReference>
<dbReference type="CCDS" id="CCDS2021.1">
    <molecule id="Q15003-1"/>
</dbReference>
<dbReference type="CCDS" id="CCDS62960.1">
    <molecule id="Q15003-2"/>
</dbReference>
<dbReference type="RefSeq" id="NP_001268639.1">
    <property type="nucleotide sequence ID" value="NM_001281710.1"/>
</dbReference>
<dbReference type="RefSeq" id="NP_001268640.1">
    <property type="nucleotide sequence ID" value="NM_001281711.1"/>
</dbReference>
<dbReference type="RefSeq" id="NP_001268641.1">
    <molecule id="Q15003-2"/>
    <property type="nucleotide sequence ID" value="NM_001281712.2"/>
</dbReference>
<dbReference type="RefSeq" id="NP_056156.2">
    <molecule id="Q15003-1"/>
    <property type="nucleotide sequence ID" value="NM_015341.4"/>
</dbReference>
<dbReference type="PDB" id="6IGX">
    <property type="method" value="X-ray"/>
    <property type="resolution" value="3.00 A"/>
    <property type="chains" value="A/C=470-526"/>
</dbReference>
<dbReference type="PDBsum" id="6IGX"/>
<dbReference type="SMR" id="Q15003"/>
<dbReference type="BioGRID" id="116970">
    <property type="interactions" value="320"/>
</dbReference>
<dbReference type="ComplexPortal" id="CPX-979">
    <property type="entry name" value="Condensin I complex"/>
</dbReference>
<dbReference type="CORUM" id="Q15003"/>
<dbReference type="DIP" id="DIP-43899N"/>
<dbReference type="FunCoup" id="Q15003">
    <property type="interactions" value="1957"/>
</dbReference>
<dbReference type="IntAct" id="Q15003">
    <property type="interactions" value="214"/>
</dbReference>
<dbReference type="MINT" id="Q15003"/>
<dbReference type="STRING" id="9606.ENSP00000240423"/>
<dbReference type="GlyGen" id="Q15003">
    <property type="glycosylation" value="1 site, 1 O-linked glycan (1 site)"/>
</dbReference>
<dbReference type="iPTMnet" id="Q15003"/>
<dbReference type="MetOSite" id="Q15003"/>
<dbReference type="PhosphoSitePlus" id="Q15003"/>
<dbReference type="BioMuta" id="NCAPH"/>
<dbReference type="DMDM" id="116241306"/>
<dbReference type="jPOST" id="Q15003"/>
<dbReference type="MassIVE" id="Q15003"/>
<dbReference type="PaxDb" id="9606-ENSP00000240423"/>
<dbReference type="PeptideAtlas" id="Q15003"/>
<dbReference type="ProteomicsDB" id="5736"/>
<dbReference type="ProteomicsDB" id="60354">
    <molecule id="Q15003-1"/>
</dbReference>
<dbReference type="Pumba" id="Q15003"/>
<dbReference type="Antibodypedia" id="1231">
    <property type="antibodies" value="348 antibodies from 37 providers"/>
</dbReference>
<dbReference type="DNASU" id="23397"/>
<dbReference type="Ensembl" id="ENST00000240423.9">
    <molecule id="Q15003-1"/>
    <property type="protein sequence ID" value="ENSP00000240423.4"/>
    <property type="gene ID" value="ENSG00000121152.10"/>
</dbReference>
<dbReference type="Ensembl" id="ENST00000427946.5">
    <molecule id="Q15003-2"/>
    <property type="protein sequence ID" value="ENSP00000400774.1"/>
    <property type="gene ID" value="ENSG00000121152.10"/>
</dbReference>
<dbReference type="GeneID" id="23397"/>
<dbReference type="KEGG" id="hsa:23397"/>
<dbReference type="MANE-Select" id="ENST00000240423.9">
    <property type="protein sequence ID" value="ENSP00000240423.4"/>
    <property type="RefSeq nucleotide sequence ID" value="NM_015341.5"/>
    <property type="RefSeq protein sequence ID" value="NP_056156.2"/>
</dbReference>
<dbReference type="UCSC" id="uc002svz.3">
    <molecule id="Q15003-1"/>
    <property type="organism name" value="human"/>
</dbReference>
<dbReference type="AGR" id="HGNC:1112"/>
<dbReference type="CTD" id="23397"/>
<dbReference type="DisGeNET" id="23397"/>
<dbReference type="GeneCards" id="NCAPH"/>
<dbReference type="HGNC" id="HGNC:1112">
    <property type="gene designation" value="NCAPH"/>
</dbReference>
<dbReference type="HPA" id="ENSG00000121152">
    <property type="expression patterns" value="Tissue enhanced (bone marrow, lymphoid tissue, testis)"/>
</dbReference>
<dbReference type="MalaCards" id="NCAPH"/>
<dbReference type="MIM" id="602332">
    <property type="type" value="gene"/>
</dbReference>
<dbReference type="MIM" id="617985">
    <property type="type" value="phenotype"/>
</dbReference>
<dbReference type="neXtProt" id="NX_Q15003"/>
<dbReference type="OpenTargets" id="ENSG00000121152"/>
<dbReference type="PharmGKB" id="PA162397273"/>
<dbReference type="VEuPathDB" id="HostDB:ENSG00000121152"/>
<dbReference type="eggNOG" id="KOG2328">
    <property type="taxonomic scope" value="Eukaryota"/>
</dbReference>
<dbReference type="GeneTree" id="ENSGT00390000004149"/>
<dbReference type="InParanoid" id="Q15003"/>
<dbReference type="OMA" id="FRKTCAD"/>
<dbReference type="OrthoDB" id="362021at2759"/>
<dbReference type="PAN-GO" id="Q15003">
    <property type="GO annotations" value="2 GO annotations based on evolutionary models"/>
</dbReference>
<dbReference type="PhylomeDB" id="Q15003"/>
<dbReference type="TreeFam" id="TF105678"/>
<dbReference type="PathwayCommons" id="Q15003"/>
<dbReference type="Reactome" id="R-HSA-2514853">
    <property type="pathway name" value="Condensation of Prometaphase Chromosomes"/>
</dbReference>
<dbReference type="SignaLink" id="Q15003"/>
<dbReference type="SIGNOR" id="Q15003"/>
<dbReference type="BioGRID-ORCS" id="23397">
    <property type="hits" value="707 hits in 1164 CRISPR screens"/>
</dbReference>
<dbReference type="ChiTaRS" id="NCAPH">
    <property type="organism name" value="human"/>
</dbReference>
<dbReference type="GeneWiki" id="NCAPH"/>
<dbReference type="GenomeRNAi" id="23397"/>
<dbReference type="Pharos" id="Q15003">
    <property type="development level" value="Tbio"/>
</dbReference>
<dbReference type="PRO" id="PR:Q15003"/>
<dbReference type="Proteomes" id="UP000005640">
    <property type="component" value="Chromosome 2"/>
</dbReference>
<dbReference type="RNAct" id="Q15003">
    <property type="molecule type" value="protein"/>
</dbReference>
<dbReference type="Bgee" id="ENSG00000121152">
    <property type="expression patterns" value="Expressed in ventricular zone and 103 other cell types or tissues"/>
</dbReference>
<dbReference type="ExpressionAtlas" id="Q15003">
    <property type="expression patterns" value="baseline and differential"/>
</dbReference>
<dbReference type="GO" id="GO:0000794">
    <property type="term" value="C:condensed nuclear chromosome"/>
    <property type="evidence" value="ECO:0000266"/>
    <property type="project" value="ComplexPortal"/>
</dbReference>
<dbReference type="GO" id="GO:0000796">
    <property type="term" value="C:condensin complex"/>
    <property type="evidence" value="ECO:0000314"/>
    <property type="project" value="UniProtKB"/>
</dbReference>
<dbReference type="GO" id="GO:0005829">
    <property type="term" value="C:cytosol"/>
    <property type="evidence" value="ECO:0000314"/>
    <property type="project" value="HPA"/>
</dbReference>
<dbReference type="GO" id="GO:0043231">
    <property type="term" value="C:intracellular membrane-bounded organelle"/>
    <property type="evidence" value="ECO:0000314"/>
    <property type="project" value="HPA"/>
</dbReference>
<dbReference type="GO" id="GO:0016020">
    <property type="term" value="C:membrane"/>
    <property type="evidence" value="ECO:0007005"/>
    <property type="project" value="UniProtKB"/>
</dbReference>
<dbReference type="GO" id="GO:0005654">
    <property type="term" value="C:nucleoplasm"/>
    <property type="evidence" value="ECO:0000314"/>
    <property type="project" value="HPA"/>
</dbReference>
<dbReference type="GO" id="GO:0003682">
    <property type="term" value="F:chromatin binding"/>
    <property type="evidence" value="ECO:0000318"/>
    <property type="project" value="GO_Central"/>
</dbReference>
<dbReference type="GO" id="GO:0051301">
    <property type="term" value="P:cell division"/>
    <property type="evidence" value="ECO:0007669"/>
    <property type="project" value="UniProtKB-KW"/>
</dbReference>
<dbReference type="GO" id="GO:0051309">
    <property type="term" value="P:female meiosis chromosome separation"/>
    <property type="evidence" value="ECO:0007669"/>
    <property type="project" value="Ensembl"/>
</dbReference>
<dbReference type="GO" id="GO:0010032">
    <property type="term" value="P:meiotic chromosome condensation"/>
    <property type="evidence" value="ECO:0007669"/>
    <property type="project" value="Ensembl"/>
</dbReference>
<dbReference type="GO" id="GO:0007076">
    <property type="term" value="P:mitotic chromosome condensation"/>
    <property type="evidence" value="ECO:0000314"/>
    <property type="project" value="UniProtKB"/>
</dbReference>
<dbReference type="GO" id="GO:1905821">
    <property type="term" value="P:positive regulation of chromosome condensation"/>
    <property type="evidence" value="ECO:0000314"/>
    <property type="project" value="ComplexPortal"/>
</dbReference>
<dbReference type="GO" id="GO:0051984">
    <property type="term" value="P:positive regulation of chromosome segregation"/>
    <property type="evidence" value="ECO:0000266"/>
    <property type="project" value="ComplexPortal"/>
</dbReference>
<dbReference type="GO" id="GO:1905820">
    <property type="term" value="P:positive regulation of chromosome separation"/>
    <property type="evidence" value="ECO:0000266"/>
    <property type="project" value="ComplexPortal"/>
</dbReference>
<dbReference type="InterPro" id="IPR022816">
    <property type="entry name" value="Condensin_barren_su2"/>
</dbReference>
<dbReference type="PANTHER" id="PTHR13108">
    <property type="entry name" value="CONDENSIN COMPLEX SUBUNIT 2"/>
    <property type="match status" value="1"/>
</dbReference>
<dbReference type="PANTHER" id="PTHR13108:SF9">
    <property type="entry name" value="CONDENSIN COMPLEX SUBUNIT 2"/>
    <property type="match status" value="1"/>
</dbReference>
<dbReference type="Pfam" id="PF05786">
    <property type="entry name" value="Cnd2"/>
    <property type="match status" value="1"/>
</dbReference>
<dbReference type="PIRSF" id="PIRSF017126">
    <property type="entry name" value="Condensin_H"/>
    <property type="match status" value="1"/>
</dbReference>
<gene>
    <name evidence="9 11" type="primary">NCAPH</name>
    <name type="synonym">BRRN</name>
    <name type="synonym">BRRN1</name>
    <name type="synonym">CAPH</name>
    <name type="synonym">KIAA0074</name>
</gene>
<feature type="chain" id="PRO_0000095038" description="Condensin complex subunit 2">
    <location>
        <begin position="1"/>
        <end position="741"/>
    </location>
</feature>
<feature type="region of interest" description="Disordered" evidence="3">
    <location>
        <begin position="1"/>
        <end position="67"/>
    </location>
</feature>
<feature type="region of interest" description="Disordered" evidence="3">
    <location>
        <begin position="361"/>
        <end position="383"/>
    </location>
</feature>
<feature type="region of interest" description="Disordered" evidence="3">
    <location>
        <begin position="447"/>
        <end position="467"/>
    </location>
</feature>
<feature type="compositionally biased region" description="Acidic residues" evidence="3">
    <location>
        <begin position="361"/>
        <end position="377"/>
    </location>
</feature>
<feature type="modified residue" description="Phosphoserine" evidence="15">
    <location>
        <position position="15"/>
    </location>
</feature>
<feature type="modified residue" description="Phosphoserine" evidence="15">
    <location>
        <position position="25"/>
    </location>
</feature>
<feature type="modified residue" description="Phosphoserine" evidence="2">
    <location>
        <position position="28"/>
    </location>
</feature>
<feature type="modified residue" description="Phosphothreonine" evidence="15 16">
    <location>
        <position position="49"/>
    </location>
</feature>
<feature type="modified residue" description="Phosphoserine" evidence="12 16">
    <location>
        <position position="70"/>
    </location>
</feature>
<feature type="modified residue" description="Phosphoserine" evidence="12 15 16">
    <location>
        <position position="78"/>
    </location>
</feature>
<feature type="modified residue" description="Phosphoserine" evidence="12 14 15 16">
    <location>
        <position position="81"/>
    </location>
</feature>
<feature type="modified residue" description="Phosphoserine" evidence="12 15 16">
    <location>
        <position position="87"/>
    </location>
</feature>
<feature type="modified residue" description="Phosphoserine" evidence="16">
    <location>
        <position position="89"/>
    </location>
</feature>
<feature type="modified residue" description="Phosphoserine" evidence="12 15 16">
    <location>
        <position position="92"/>
    </location>
</feature>
<feature type="modified residue" description="Phosphoserine" evidence="15">
    <location>
        <position position="96"/>
    </location>
</feature>
<feature type="modified residue" description="Phosphoserine" evidence="12 15 16">
    <location>
        <position position="201"/>
    </location>
</feature>
<feature type="modified residue" description="Phosphoserine" evidence="16">
    <location>
        <position position="233"/>
    </location>
</feature>
<feature type="modified residue" description="Phosphoserine" evidence="12 15">
    <location>
        <position position="432"/>
    </location>
</feature>
<feature type="modified residue" description="Phosphoserine" evidence="16">
    <location>
        <position position="496"/>
    </location>
</feature>
<feature type="modified residue" description="Phosphothreonine" evidence="15">
    <location>
        <position position="598"/>
    </location>
</feature>
<feature type="modified residue" description="Phosphothreonine" evidence="12 16">
    <location>
        <position position="605"/>
    </location>
</feature>
<feature type="modified residue" description="N6-acetyllysine" evidence="13">
    <location>
        <position position="637"/>
    </location>
</feature>
<feature type="cross-link" description="Glycyl lysine isopeptide (Lys-Gly) (interchain with G-Cter in SUMO2)" evidence="17">
    <location>
        <position position="488"/>
    </location>
</feature>
<feature type="splice variant" id="VSP_055179" description="In isoform 2." evidence="8">
    <location>
        <begin position="1"/>
        <end position="136"/>
    </location>
</feature>
<feature type="sequence variant" id="VAR_080954" description="In MCPH23; impairs mitotic chromosome compaction; dbSNP:rs1553446603." evidence="7">
    <original>P</original>
    <variation>L</variation>
    <location>
        <position position="243"/>
    </location>
</feature>
<feature type="sequence variant" id="VAR_027882" description="In dbSNP:rs2305935." evidence="6">
    <original>V</original>
    <variation>A</variation>
    <location>
        <position position="539"/>
    </location>
</feature>
<feature type="helix" evidence="18">
    <location>
        <begin position="481"/>
        <end position="484"/>
    </location>
</feature>
<feature type="helix" evidence="18">
    <location>
        <begin position="503"/>
        <end position="506"/>
    </location>
</feature>
<feature type="helix" evidence="18">
    <location>
        <begin position="516"/>
        <end position="519"/>
    </location>
</feature>
<organism>
    <name type="scientific">Homo sapiens</name>
    <name type="common">Human</name>
    <dbReference type="NCBI Taxonomy" id="9606"/>
    <lineage>
        <taxon>Eukaryota</taxon>
        <taxon>Metazoa</taxon>
        <taxon>Chordata</taxon>
        <taxon>Craniata</taxon>
        <taxon>Vertebrata</taxon>
        <taxon>Euteleostomi</taxon>
        <taxon>Mammalia</taxon>
        <taxon>Eutheria</taxon>
        <taxon>Euarchontoglires</taxon>
        <taxon>Primates</taxon>
        <taxon>Haplorrhini</taxon>
        <taxon>Catarrhini</taxon>
        <taxon>Hominidae</taxon>
        <taxon>Homo</taxon>
    </lineage>
</organism>
<proteinExistence type="evidence at protein level"/>